<protein>
    <recommendedName>
        <fullName>AAA-ATPase At1g43910</fullName>
        <ecNumber evidence="1">3.6.1.-</ecNumber>
    </recommendedName>
</protein>
<feature type="chain" id="PRO_0000434703" description="AAA-ATPase At1g43910">
    <location>
        <begin position="1"/>
        <end position="475"/>
    </location>
</feature>
<feature type="transmembrane region" description="Helical" evidence="2">
    <location>
        <begin position="11"/>
        <end position="28"/>
    </location>
</feature>
<feature type="region of interest" description="Disordered" evidence="3">
    <location>
        <begin position="306"/>
        <end position="328"/>
    </location>
</feature>
<feature type="region of interest" description="Disordered" evidence="3">
    <location>
        <begin position="453"/>
        <end position="475"/>
    </location>
</feature>
<feature type="compositionally biased region" description="Acidic residues" evidence="3">
    <location>
        <begin position="457"/>
        <end position="467"/>
    </location>
</feature>
<feature type="binding site" evidence="2">
    <location>
        <begin position="246"/>
        <end position="253"/>
    </location>
    <ligand>
        <name>ATP</name>
        <dbReference type="ChEBI" id="CHEBI:30616"/>
    </ligand>
</feature>
<feature type="modified residue" description="Phosphothreonine" evidence="10">
    <location>
        <position position="85"/>
    </location>
</feature>
<feature type="sequence conflict" description="In Ref. 3; BAC42789." evidence="6" ref="3">
    <original>L</original>
    <variation>I</variation>
    <location>
        <position position="416"/>
    </location>
</feature>
<evidence type="ECO:0000250" key="1">
    <source>
        <dbReference type="UniProtKB" id="Q9FLD5"/>
    </source>
</evidence>
<evidence type="ECO:0000255" key="2"/>
<evidence type="ECO:0000256" key="3">
    <source>
        <dbReference type="SAM" id="MobiDB-lite"/>
    </source>
</evidence>
<evidence type="ECO:0000269" key="4">
    <source>
    </source>
</evidence>
<evidence type="ECO:0000269" key="5">
    <source>
    </source>
</evidence>
<evidence type="ECO:0000305" key="6"/>
<evidence type="ECO:0000312" key="7">
    <source>
        <dbReference type="EMBL" id="AAF79688.1"/>
    </source>
</evidence>
<evidence type="ECO:0000312" key="8">
    <source>
        <dbReference type="EMBL" id="AEE32007.1"/>
    </source>
</evidence>
<evidence type="ECO:0000312" key="9">
    <source>
        <dbReference type="Proteomes" id="UP000006548"/>
    </source>
</evidence>
<evidence type="ECO:0007744" key="10">
    <source>
    </source>
</evidence>
<keyword id="KW-0067">ATP-binding</keyword>
<keyword id="KW-0378">Hydrolase</keyword>
<keyword id="KW-0460">Magnesium</keyword>
<keyword id="KW-0472">Membrane</keyword>
<keyword id="KW-0547">Nucleotide-binding</keyword>
<keyword id="KW-0597">Phosphoprotein</keyword>
<keyword id="KW-1185">Reference proteome</keyword>
<keyword id="KW-0812">Transmembrane</keyword>
<keyword id="KW-1133">Transmembrane helix</keyword>
<gene>
    <name evidence="8" type="ordered locus">At1g43910</name>
    <name evidence="7" type="ORF">F9C16.7</name>
</gene>
<proteinExistence type="evidence at protein level"/>
<dbReference type="EC" id="3.6.1.-" evidence="1"/>
<dbReference type="EMBL" id="AC022314">
    <property type="protein sequence ID" value="AAF79688.1"/>
    <property type="molecule type" value="Genomic_DNA"/>
</dbReference>
<dbReference type="EMBL" id="CP002684">
    <property type="protein sequence ID" value="AEE32007.1"/>
    <property type="molecule type" value="Genomic_DNA"/>
</dbReference>
<dbReference type="EMBL" id="AK118165">
    <property type="protein sequence ID" value="BAC42789.2"/>
    <property type="molecule type" value="mRNA"/>
</dbReference>
<dbReference type="PIR" id="C96503">
    <property type="entry name" value="C96503"/>
</dbReference>
<dbReference type="RefSeq" id="NP_175058.1">
    <property type="nucleotide sequence ID" value="NM_103518.4"/>
</dbReference>
<dbReference type="SMR" id="Q9LP11"/>
<dbReference type="FunCoup" id="Q9LP11">
    <property type="interactions" value="1306"/>
</dbReference>
<dbReference type="IntAct" id="Q9LP11">
    <property type="interactions" value="1"/>
</dbReference>
<dbReference type="STRING" id="3702.Q9LP11"/>
<dbReference type="TCDB" id="3.A.28.1.4">
    <property type="family name" value="the aaa-atpase, bcs1 (bcs1) family"/>
</dbReference>
<dbReference type="iPTMnet" id="Q9LP11"/>
<dbReference type="PaxDb" id="3702-AT1G43910.1"/>
<dbReference type="ProteomicsDB" id="243274"/>
<dbReference type="EnsemblPlants" id="AT1G43910.1">
    <property type="protein sequence ID" value="AT1G43910.1"/>
    <property type="gene ID" value="AT1G43910"/>
</dbReference>
<dbReference type="GeneID" id="840990"/>
<dbReference type="Gramene" id="AT1G43910.1">
    <property type="protein sequence ID" value="AT1G43910.1"/>
    <property type="gene ID" value="AT1G43910"/>
</dbReference>
<dbReference type="KEGG" id="ath:AT1G43910"/>
<dbReference type="Araport" id="AT1G43910"/>
<dbReference type="TAIR" id="AT1G43910"/>
<dbReference type="eggNOG" id="KOG0743">
    <property type="taxonomic scope" value="Eukaryota"/>
</dbReference>
<dbReference type="HOGENOM" id="CLU_010189_0_1_1"/>
<dbReference type="InParanoid" id="Q9LP11"/>
<dbReference type="OMA" id="EGMTLEW"/>
<dbReference type="OrthoDB" id="10251412at2759"/>
<dbReference type="PRO" id="PR:Q9LP11"/>
<dbReference type="Proteomes" id="UP000006548">
    <property type="component" value="Chromosome 1"/>
</dbReference>
<dbReference type="ExpressionAtlas" id="Q9LP11">
    <property type="expression patterns" value="baseline and differential"/>
</dbReference>
<dbReference type="GO" id="GO:0005783">
    <property type="term" value="C:endoplasmic reticulum"/>
    <property type="evidence" value="ECO:0007005"/>
    <property type="project" value="TAIR"/>
</dbReference>
<dbReference type="GO" id="GO:0005794">
    <property type="term" value="C:Golgi apparatus"/>
    <property type="evidence" value="ECO:0007005"/>
    <property type="project" value="TAIR"/>
</dbReference>
<dbReference type="GO" id="GO:0016020">
    <property type="term" value="C:membrane"/>
    <property type="evidence" value="ECO:0007669"/>
    <property type="project" value="UniProtKB-SubCell"/>
</dbReference>
<dbReference type="GO" id="GO:0009506">
    <property type="term" value="C:plasmodesma"/>
    <property type="evidence" value="ECO:0007005"/>
    <property type="project" value="TAIR"/>
</dbReference>
<dbReference type="GO" id="GO:0005524">
    <property type="term" value="F:ATP binding"/>
    <property type="evidence" value="ECO:0007669"/>
    <property type="project" value="UniProtKB-KW"/>
</dbReference>
<dbReference type="GO" id="GO:0016887">
    <property type="term" value="F:ATP hydrolysis activity"/>
    <property type="evidence" value="ECO:0007669"/>
    <property type="project" value="InterPro"/>
</dbReference>
<dbReference type="GO" id="GO:0051365">
    <property type="term" value="P:cellular response to potassium ion starvation"/>
    <property type="evidence" value="ECO:0000270"/>
    <property type="project" value="UniProtKB"/>
</dbReference>
<dbReference type="FunFam" id="3.40.50.300:FF:001122">
    <property type="entry name" value="AAA-ATPase ASD, mitochondrial"/>
    <property type="match status" value="1"/>
</dbReference>
<dbReference type="Gene3D" id="6.10.280.40">
    <property type="match status" value="1"/>
</dbReference>
<dbReference type="Gene3D" id="3.40.50.300">
    <property type="entry name" value="P-loop containing nucleotide triphosphate hydrolases"/>
    <property type="match status" value="1"/>
</dbReference>
<dbReference type="InterPro" id="IPR003593">
    <property type="entry name" value="AAA+_ATPase"/>
</dbReference>
<dbReference type="InterPro" id="IPR025753">
    <property type="entry name" value="AAA_N_dom"/>
</dbReference>
<dbReference type="InterPro" id="IPR003959">
    <property type="entry name" value="ATPase_AAA_core"/>
</dbReference>
<dbReference type="InterPro" id="IPR050747">
    <property type="entry name" value="Mitochondrial_chaperone_BCS1"/>
</dbReference>
<dbReference type="InterPro" id="IPR027417">
    <property type="entry name" value="P-loop_NTPase"/>
</dbReference>
<dbReference type="PANTHER" id="PTHR23070">
    <property type="entry name" value="BCS1 AAA-TYPE ATPASE"/>
    <property type="match status" value="1"/>
</dbReference>
<dbReference type="Pfam" id="PF00004">
    <property type="entry name" value="AAA"/>
    <property type="match status" value="1"/>
</dbReference>
<dbReference type="Pfam" id="PF14363">
    <property type="entry name" value="AAA_assoc"/>
    <property type="match status" value="1"/>
</dbReference>
<dbReference type="SMART" id="SM00382">
    <property type="entry name" value="AAA"/>
    <property type="match status" value="1"/>
</dbReference>
<dbReference type="SUPFAM" id="SSF52540">
    <property type="entry name" value="P-loop containing nucleoside triphosphate hydrolases"/>
    <property type="match status" value="1"/>
</dbReference>
<organism evidence="9">
    <name type="scientific">Arabidopsis thaliana</name>
    <name type="common">Mouse-ear cress</name>
    <dbReference type="NCBI Taxonomy" id="3702"/>
    <lineage>
        <taxon>Eukaryota</taxon>
        <taxon>Viridiplantae</taxon>
        <taxon>Streptophyta</taxon>
        <taxon>Embryophyta</taxon>
        <taxon>Tracheophyta</taxon>
        <taxon>Spermatophyta</taxon>
        <taxon>Magnoliopsida</taxon>
        <taxon>eudicotyledons</taxon>
        <taxon>Gunneridae</taxon>
        <taxon>Pentapetalae</taxon>
        <taxon>rosids</taxon>
        <taxon>malvids</taxon>
        <taxon>Brassicales</taxon>
        <taxon>Brassicaceae</taxon>
        <taxon>Camelineae</taxon>
        <taxon>Arabidopsis</taxon>
    </lineage>
</organism>
<comment type="catalytic activity">
    <reaction evidence="1">
        <text>ATP + H2O = ADP + phosphate + H(+)</text>
        <dbReference type="Rhea" id="RHEA:13065"/>
        <dbReference type="ChEBI" id="CHEBI:15377"/>
        <dbReference type="ChEBI" id="CHEBI:15378"/>
        <dbReference type="ChEBI" id="CHEBI:30616"/>
        <dbReference type="ChEBI" id="CHEBI:43474"/>
        <dbReference type="ChEBI" id="CHEBI:456216"/>
    </reaction>
</comment>
<comment type="cofactor">
    <cofactor evidence="1">
        <name>Mg(2+)</name>
        <dbReference type="ChEBI" id="CHEBI:18420"/>
    </cofactor>
</comment>
<comment type="subcellular location">
    <subcellularLocation>
        <location evidence="2">Membrane</location>
        <topology evidence="2">Single-pass membrane protein</topology>
    </subcellularLocation>
</comment>
<comment type="tissue specificity">
    <text evidence="5">Expressed in developing shoots.</text>
</comment>
<comment type="induction">
    <text evidence="4">Accumulates in shoots and roots upon potassium-starvation.</text>
</comment>
<comment type="similarity">
    <text evidence="6">Belongs to the AAA ATPase family. BCS1 subfamily.</text>
</comment>
<accession>Q9LP11</accession>
<accession>Q7FLL4</accession>
<sequence length="475" mass="54238">MATLYSQVPSVSAVFSLYTSFSAITMLFRTILNEIVPKRIREYIAMKAVDFFSSYFQSDFTFVIEQRWEFVENQTFRAAEVYLPTCLAGLSTGKLLVGSSNLKNPAAEPKLGIPVNTKIIDNFEGIHLEWTLHSVETKKYLPEKRYFHLTCKKEFREKIMTDYFTYLAKSAEKIMSHRENLKIYTYNQDRSKWESAIFEHHTTFETLAVEPDLKKTLIDDLDAFSKGKDFFKSVGRAWKRGYLLYGPPGTGKSSMVAAIANHMKYHIYDLQIQSVRDDGELREILTSTKNRSILLIEDIDCGADASRRRQSKKKEEDGGEDDGEPQKRKKKFEVGISLSGLLNFVDGLWSSCGEEKIIIFTTNHKEKLDPALLRPGRMDVHILMDNCTPFVFKKLVALYLKTDEHVLFDPIEKLILEVSSTPAEVTQQLMASKNADIALKGLAEFLENKKLKKGEDSSVEEEGEIEDAETKEAET</sequence>
<reference key="1">
    <citation type="journal article" date="2000" name="Nature">
        <title>Sequence and analysis of chromosome 1 of the plant Arabidopsis thaliana.</title>
        <authorList>
            <person name="Theologis A."/>
            <person name="Ecker J.R."/>
            <person name="Palm C.J."/>
            <person name="Federspiel N.A."/>
            <person name="Kaul S."/>
            <person name="White O."/>
            <person name="Alonso J."/>
            <person name="Altafi H."/>
            <person name="Araujo R."/>
            <person name="Bowman C.L."/>
            <person name="Brooks S.Y."/>
            <person name="Buehler E."/>
            <person name="Chan A."/>
            <person name="Chao Q."/>
            <person name="Chen H."/>
            <person name="Cheuk R.F."/>
            <person name="Chin C.W."/>
            <person name="Chung M.K."/>
            <person name="Conn L."/>
            <person name="Conway A.B."/>
            <person name="Conway A.R."/>
            <person name="Creasy T.H."/>
            <person name="Dewar K."/>
            <person name="Dunn P."/>
            <person name="Etgu P."/>
            <person name="Feldblyum T.V."/>
            <person name="Feng J.-D."/>
            <person name="Fong B."/>
            <person name="Fujii C.Y."/>
            <person name="Gill J.E."/>
            <person name="Goldsmith A.D."/>
            <person name="Haas B."/>
            <person name="Hansen N.F."/>
            <person name="Hughes B."/>
            <person name="Huizar L."/>
            <person name="Hunter J.L."/>
            <person name="Jenkins J."/>
            <person name="Johnson-Hopson C."/>
            <person name="Khan S."/>
            <person name="Khaykin E."/>
            <person name="Kim C.J."/>
            <person name="Koo H.L."/>
            <person name="Kremenetskaia I."/>
            <person name="Kurtz D.B."/>
            <person name="Kwan A."/>
            <person name="Lam B."/>
            <person name="Langin-Hooper S."/>
            <person name="Lee A."/>
            <person name="Lee J.M."/>
            <person name="Lenz C.A."/>
            <person name="Li J.H."/>
            <person name="Li Y.-P."/>
            <person name="Lin X."/>
            <person name="Liu S.X."/>
            <person name="Liu Z.A."/>
            <person name="Luros J.S."/>
            <person name="Maiti R."/>
            <person name="Marziali A."/>
            <person name="Militscher J."/>
            <person name="Miranda M."/>
            <person name="Nguyen M."/>
            <person name="Nierman W.C."/>
            <person name="Osborne B.I."/>
            <person name="Pai G."/>
            <person name="Peterson J."/>
            <person name="Pham P.K."/>
            <person name="Rizzo M."/>
            <person name="Rooney T."/>
            <person name="Rowley D."/>
            <person name="Sakano H."/>
            <person name="Salzberg S.L."/>
            <person name="Schwartz J.R."/>
            <person name="Shinn P."/>
            <person name="Southwick A.M."/>
            <person name="Sun H."/>
            <person name="Tallon L.J."/>
            <person name="Tambunga G."/>
            <person name="Toriumi M.J."/>
            <person name="Town C.D."/>
            <person name="Utterback T."/>
            <person name="Van Aken S."/>
            <person name="Vaysberg M."/>
            <person name="Vysotskaia V.S."/>
            <person name="Walker M."/>
            <person name="Wu D."/>
            <person name="Yu G."/>
            <person name="Fraser C.M."/>
            <person name="Venter J.C."/>
            <person name="Davis R.W."/>
        </authorList>
    </citation>
    <scope>NUCLEOTIDE SEQUENCE [LARGE SCALE GENOMIC DNA]</scope>
    <source>
        <strain>cv. Columbia</strain>
    </source>
</reference>
<reference key="2">
    <citation type="journal article" date="2017" name="Plant J.">
        <title>Araport11: a complete reannotation of the Arabidopsis thaliana reference genome.</title>
        <authorList>
            <person name="Cheng C.Y."/>
            <person name="Krishnakumar V."/>
            <person name="Chan A.P."/>
            <person name="Thibaud-Nissen F."/>
            <person name="Schobel S."/>
            <person name="Town C.D."/>
        </authorList>
    </citation>
    <scope>GENOME REANNOTATION</scope>
    <source>
        <strain>cv. Columbia</strain>
    </source>
</reference>
<reference key="3">
    <citation type="journal article" date="2002" name="Science">
        <title>Functional annotation of a full-length Arabidopsis cDNA collection.</title>
        <authorList>
            <person name="Seki M."/>
            <person name="Narusaka M."/>
            <person name="Kamiya A."/>
            <person name="Ishida J."/>
            <person name="Satou M."/>
            <person name="Sakurai T."/>
            <person name="Nakajima M."/>
            <person name="Enju A."/>
            <person name="Akiyama K."/>
            <person name="Oono Y."/>
            <person name="Muramatsu M."/>
            <person name="Hayashizaki Y."/>
            <person name="Kawai J."/>
            <person name="Carninci P."/>
            <person name="Itoh M."/>
            <person name="Ishii Y."/>
            <person name="Arakawa T."/>
            <person name="Shibata K."/>
            <person name="Shinagawa A."/>
            <person name="Shinozaki K."/>
        </authorList>
    </citation>
    <scope>NUCLEOTIDE SEQUENCE [LARGE SCALE MRNA]</scope>
    <source>
        <strain>cv. Columbia</strain>
    </source>
</reference>
<reference key="4">
    <citation type="journal article" date="2004" name="Plant Physiol.">
        <title>Cesium toxicity in Arabidopsis.</title>
        <authorList>
            <person name="Hampton C.R."/>
            <person name="Bowen H.C."/>
            <person name="Broadley M.R."/>
            <person name="Hammond J.P."/>
            <person name="Mead A."/>
            <person name="Payne K.A."/>
            <person name="Pritchard J."/>
            <person name="White P.J."/>
        </authorList>
    </citation>
    <scope>INDUCTION BY POTASSIUM STARVATION</scope>
    <source>
        <strain>cv. Wassilewskija-2</strain>
    </source>
</reference>
<reference key="5">
    <citation type="journal article" date="2006" name="Plant Physiol.">
        <title>Gene expression programs during shoot, root, and callus development in Arabidopsis tissue culture.</title>
        <authorList>
            <person name="Che P."/>
            <person name="Lall S."/>
            <person name="Nettleton D."/>
            <person name="Howell S.H."/>
        </authorList>
    </citation>
    <scope>TISSUE SPECIFICITY</scope>
</reference>
<reference key="6">
    <citation type="journal article" date="2009" name="J. Proteomics">
        <title>Phosphoproteomic analysis of nuclei-enriched fractions from Arabidopsis thaliana.</title>
        <authorList>
            <person name="Jones A.M.E."/>
            <person name="MacLean D."/>
            <person name="Studholme D.J."/>
            <person name="Serna-Sanz A."/>
            <person name="Andreasson E."/>
            <person name="Rathjen J.P."/>
            <person name="Peck S.C."/>
        </authorList>
    </citation>
    <scope>PHOSPHORYLATION [LARGE SCALE ANALYSIS] AT THR-85</scope>
    <scope>IDENTIFICATION BY MASS SPECTROMETRY [LARGE SCALE ANALYSIS]</scope>
    <source>
        <strain>cv. Columbia</strain>
    </source>
</reference>
<name>AATP1_ARATH</name>